<organism>
    <name type="scientific">Staphylococcus aureus (strain N315)</name>
    <dbReference type="NCBI Taxonomy" id="158879"/>
    <lineage>
        <taxon>Bacteria</taxon>
        <taxon>Bacillati</taxon>
        <taxon>Bacillota</taxon>
        <taxon>Bacilli</taxon>
        <taxon>Bacillales</taxon>
        <taxon>Staphylococcaceae</taxon>
        <taxon>Staphylococcus</taxon>
    </lineage>
</organism>
<sequence length="62" mass="6977">MGKQCFVTGRKASTGNRRSHALNSTKRRWNANLQKVRILVDGKPKKVWVSARALKSGKVTRV</sequence>
<evidence type="ECO:0000255" key="1">
    <source>
        <dbReference type="HAMAP-Rule" id="MF_00373"/>
    </source>
</evidence>
<evidence type="ECO:0000256" key="2">
    <source>
        <dbReference type="SAM" id="MobiDB-lite"/>
    </source>
</evidence>
<evidence type="ECO:0000305" key="3"/>
<name>RL28_STAAN</name>
<dbReference type="EMBL" id="BA000018">
    <property type="protein sequence ID" value="BAB42319.1"/>
    <property type="molecule type" value="Genomic_DNA"/>
</dbReference>
<dbReference type="PIR" id="C89895">
    <property type="entry name" value="C89895"/>
</dbReference>
<dbReference type="RefSeq" id="WP_000517908.1">
    <property type="nucleotide sequence ID" value="NC_002745.2"/>
</dbReference>
<dbReference type="SMR" id="P66153"/>
<dbReference type="EnsemblBacteria" id="BAB42319">
    <property type="protein sequence ID" value="BAB42319"/>
    <property type="gene ID" value="BAB42319"/>
</dbReference>
<dbReference type="GeneID" id="98345539"/>
<dbReference type="KEGG" id="sau:SA1067"/>
<dbReference type="HOGENOM" id="CLU_064548_7_1_9"/>
<dbReference type="GO" id="GO:1990904">
    <property type="term" value="C:ribonucleoprotein complex"/>
    <property type="evidence" value="ECO:0007669"/>
    <property type="project" value="UniProtKB-KW"/>
</dbReference>
<dbReference type="GO" id="GO:0005840">
    <property type="term" value="C:ribosome"/>
    <property type="evidence" value="ECO:0007669"/>
    <property type="project" value="UniProtKB-KW"/>
</dbReference>
<dbReference type="GO" id="GO:0003735">
    <property type="term" value="F:structural constituent of ribosome"/>
    <property type="evidence" value="ECO:0007669"/>
    <property type="project" value="InterPro"/>
</dbReference>
<dbReference type="GO" id="GO:0006412">
    <property type="term" value="P:translation"/>
    <property type="evidence" value="ECO:0007669"/>
    <property type="project" value="UniProtKB-UniRule"/>
</dbReference>
<dbReference type="Gene3D" id="2.30.170.40">
    <property type="entry name" value="Ribosomal protein L28/L24"/>
    <property type="match status" value="1"/>
</dbReference>
<dbReference type="HAMAP" id="MF_00373">
    <property type="entry name" value="Ribosomal_bL28"/>
    <property type="match status" value="1"/>
</dbReference>
<dbReference type="InterPro" id="IPR050096">
    <property type="entry name" value="Bacterial_rp_bL28"/>
</dbReference>
<dbReference type="InterPro" id="IPR026569">
    <property type="entry name" value="Ribosomal_bL28"/>
</dbReference>
<dbReference type="InterPro" id="IPR034704">
    <property type="entry name" value="Ribosomal_bL28/bL31-like_sf"/>
</dbReference>
<dbReference type="InterPro" id="IPR001383">
    <property type="entry name" value="Ribosomal_bL28_bact-type"/>
</dbReference>
<dbReference type="InterPro" id="IPR037147">
    <property type="entry name" value="Ribosomal_bL28_sf"/>
</dbReference>
<dbReference type="NCBIfam" id="TIGR00009">
    <property type="entry name" value="L28"/>
    <property type="match status" value="1"/>
</dbReference>
<dbReference type="PANTHER" id="PTHR39080">
    <property type="entry name" value="50S RIBOSOMAL PROTEIN L28"/>
    <property type="match status" value="1"/>
</dbReference>
<dbReference type="PANTHER" id="PTHR39080:SF1">
    <property type="entry name" value="LARGE RIBOSOMAL SUBUNIT PROTEIN BL28A"/>
    <property type="match status" value="1"/>
</dbReference>
<dbReference type="Pfam" id="PF00830">
    <property type="entry name" value="Ribosomal_L28"/>
    <property type="match status" value="1"/>
</dbReference>
<dbReference type="SUPFAM" id="SSF143800">
    <property type="entry name" value="L28p-like"/>
    <property type="match status" value="1"/>
</dbReference>
<comment type="similarity">
    <text evidence="1">Belongs to the bacterial ribosomal protein bL28 family.</text>
</comment>
<keyword id="KW-0687">Ribonucleoprotein</keyword>
<keyword id="KW-0689">Ribosomal protein</keyword>
<accession>P66153</accession>
<accession>Q99UP4</accession>
<reference key="1">
    <citation type="journal article" date="2001" name="Lancet">
        <title>Whole genome sequencing of meticillin-resistant Staphylococcus aureus.</title>
        <authorList>
            <person name="Kuroda M."/>
            <person name="Ohta T."/>
            <person name="Uchiyama I."/>
            <person name="Baba T."/>
            <person name="Yuzawa H."/>
            <person name="Kobayashi I."/>
            <person name="Cui L."/>
            <person name="Oguchi A."/>
            <person name="Aoki K."/>
            <person name="Nagai Y."/>
            <person name="Lian J.-Q."/>
            <person name="Ito T."/>
            <person name="Kanamori M."/>
            <person name="Matsumaru H."/>
            <person name="Maruyama A."/>
            <person name="Murakami H."/>
            <person name="Hosoyama A."/>
            <person name="Mizutani-Ui Y."/>
            <person name="Takahashi N.K."/>
            <person name="Sawano T."/>
            <person name="Inoue R."/>
            <person name="Kaito C."/>
            <person name="Sekimizu K."/>
            <person name="Hirakawa H."/>
            <person name="Kuhara S."/>
            <person name="Goto S."/>
            <person name="Yabuzaki J."/>
            <person name="Kanehisa M."/>
            <person name="Yamashita A."/>
            <person name="Oshima K."/>
            <person name="Furuya K."/>
            <person name="Yoshino C."/>
            <person name="Shiba T."/>
            <person name="Hattori M."/>
            <person name="Ogasawara N."/>
            <person name="Hayashi H."/>
            <person name="Hiramatsu K."/>
        </authorList>
    </citation>
    <scope>NUCLEOTIDE SEQUENCE [LARGE SCALE GENOMIC DNA]</scope>
    <source>
        <strain>N315</strain>
    </source>
</reference>
<proteinExistence type="inferred from homology"/>
<protein>
    <recommendedName>
        <fullName evidence="1">Large ribosomal subunit protein bL28</fullName>
    </recommendedName>
    <alternativeName>
        <fullName evidence="3">50S ribosomal protein L28</fullName>
    </alternativeName>
</protein>
<gene>
    <name evidence="1" type="primary">rpmB</name>
    <name type="ordered locus">SA1067</name>
</gene>
<feature type="chain" id="PRO_0000178550" description="Large ribosomal subunit protein bL28">
    <location>
        <begin position="1"/>
        <end position="62"/>
    </location>
</feature>
<feature type="region of interest" description="Disordered" evidence="2">
    <location>
        <begin position="1"/>
        <end position="22"/>
    </location>
</feature>